<proteinExistence type="inferred from homology"/>
<comment type="function">
    <text evidence="1">Participates in chromosomal partition during cell division. May act via the formation of a condensin-like complex containing Smc and ScpB that pull DNA away from mid-cell into both cell halves.</text>
</comment>
<comment type="subunit">
    <text evidence="1">Component of a cohesin-like complex composed of ScpA, ScpB and the Smc homodimer, in which ScpA and ScpB bind to the head domain of Smc. The presence of the three proteins is required for the association of the complex with DNA.</text>
</comment>
<comment type="subcellular location">
    <subcellularLocation>
        <location evidence="1">Cytoplasm</location>
    </subcellularLocation>
    <text evidence="1">Associated with two foci at the outer edges of the nucleoid region in young cells, and at four foci within both cell halves in older cells.</text>
</comment>
<comment type="similarity">
    <text evidence="1">Belongs to the ScpA family.</text>
</comment>
<reference key="1">
    <citation type="journal article" date="2005" name="J. Bacteriol.">
        <title>Insights on evolution of virulence and resistance from the complete genome analysis of an early methicillin-resistant Staphylococcus aureus strain and a biofilm-producing methicillin-resistant Staphylococcus epidermidis strain.</title>
        <authorList>
            <person name="Gill S.R."/>
            <person name="Fouts D.E."/>
            <person name="Archer G.L."/>
            <person name="Mongodin E.F."/>
            <person name="DeBoy R.T."/>
            <person name="Ravel J."/>
            <person name="Paulsen I.T."/>
            <person name="Kolonay J.F."/>
            <person name="Brinkac L.M."/>
            <person name="Beanan M.J."/>
            <person name="Dodson R.J."/>
            <person name="Daugherty S.C."/>
            <person name="Madupu R."/>
            <person name="Angiuoli S.V."/>
            <person name="Durkin A.S."/>
            <person name="Haft D.H."/>
            <person name="Vamathevan J.J."/>
            <person name="Khouri H."/>
            <person name="Utterback T.R."/>
            <person name="Lee C."/>
            <person name="Dimitrov G."/>
            <person name="Jiang L."/>
            <person name="Qin H."/>
            <person name="Weidman J."/>
            <person name="Tran K."/>
            <person name="Kang K.H."/>
            <person name="Hance I.R."/>
            <person name="Nelson K.E."/>
            <person name="Fraser C.M."/>
        </authorList>
    </citation>
    <scope>NUCLEOTIDE SEQUENCE [LARGE SCALE GENOMIC DNA]</scope>
    <source>
        <strain>COL</strain>
    </source>
</reference>
<organism>
    <name type="scientific">Staphylococcus aureus (strain COL)</name>
    <dbReference type="NCBI Taxonomy" id="93062"/>
    <lineage>
        <taxon>Bacteria</taxon>
        <taxon>Bacillati</taxon>
        <taxon>Bacillota</taxon>
        <taxon>Bacilli</taxon>
        <taxon>Bacillales</taxon>
        <taxon>Staphylococcaceae</taxon>
        <taxon>Staphylococcus</taxon>
    </lineage>
</organism>
<keyword id="KW-0131">Cell cycle</keyword>
<keyword id="KW-0132">Cell division</keyword>
<keyword id="KW-0159">Chromosome partition</keyword>
<keyword id="KW-0963">Cytoplasm</keyword>
<evidence type="ECO:0000255" key="1">
    <source>
        <dbReference type="HAMAP-Rule" id="MF_01805"/>
    </source>
</evidence>
<protein>
    <recommendedName>
        <fullName evidence="1">Segregation and condensation protein A</fullName>
    </recommendedName>
</protein>
<gene>
    <name evidence="1" type="primary">scpA</name>
    <name type="ordered locus">SACOL1538</name>
</gene>
<dbReference type="EMBL" id="CP000046">
    <property type="protein sequence ID" value="AAW36731.1"/>
    <property type="molecule type" value="Genomic_DNA"/>
</dbReference>
<dbReference type="RefSeq" id="WP_000273371.1">
    <property type="nucleotide sequence ID" value="NZ_JBGOFO010000003.1"/>
</dbReference>
<dbReference type="SMR" id="Q5HFS7"/>
<dbReference type="KEGG" id="sac:SACOL1538"/>
<dbReference type="HOGENOM" id="CLU_038686_3_1_9"/>
<dbReference type="Proteomes" id="UP000000530">
    <property type="component" value="Chromosome"/>
</dbReference>
<dbReference type="GO" id="GO:0005737">
    <property type="term" value="C:cytoplasm"/>
    <property type="evidence" value="ECO:0007669"/>
    <property type="project" value="UniProtKB-SubCell"/>
</dbReference>
<dbReference type="GO" id="GO:0051301">
    <property type="term" value="P:cell division"/>
    <property type="evidence" value="ECO:0007669"/>
    <property type="project" value="UniProtKB-KW"/>
</dbReference>
<dbReference type="GO" id="GO:0007059">
    <property type="term" value="P:chromosome segregation"/>
    <property type="evidence" value="ECO:0007669"/>
    <property type="project" value="UniProtKB-UniRule"/>
</dbReference>
<dbReference type="GO" id="GO:0006260">
    <property type="term" value="P:DNA replication"/>
    <property type="evidence" value="ECO:0007669"/>
    <property type="project" value="UniProtKB-UniRule"/>
</dbReference>
<dbReference type="Gene3D" id="6.10.250.2410">
    <property type="match status" value="1"/>
</dbReference>
<dbReference type="Gene3D" id="1.10.10.580">
    <property type="entry name" value="Structural maintenance of chromosome 1. Chain E"/>
    <property type="match status" value="1"/>
</dbReference>
<dbReference type="HAMAP" id="MF_01805">
    <property type="entry name" value="ScpA"/>
    <property type="match status" value="1"/>
</dbReference>
<dbReference type="InterPro" id="IPR003768">
    <property type="entry name" value="ScpA"/>
</dbReference>
<dbReference type="InterPro" id="IPR023093">
    <property type="entry name" value="ScpA-like_C"/>
</dbReference>
<dbReference type="PANTHER" id="PTHR33969">
    <property type="entry name" value="SEGREGATION AND CONDENSATION PROTEIN A"/>
    <property type="match status" value="1"/>
</dbReference>
<dbReference type="PANTHER" id="PTHR33969:SF2">
    <property type="entry name" value="SEGREGATION AND CONDENSATION PROTEIN A"/>
    <property type="match status" value="1"/>
</dbReference>
<dbReference type="Pfam" id="PF02616">
    <property type="entry name" value="SMC_ScpA"/>
    <property type="match status" value="1"/>
</dbReference>
<feature type="chain" id="PRO_0000211100" description="Segregation and condensation protein A">
    <location>
        <begin position="1"/>
        <end position="243"/>
    </location>
</feature>
<name>SCPA_STAAC</name>
<sequence length="243" mass="28671">MYEVKLDAFNGPLDLLLHLIQKFEIDIYDIPMQALTEQYMQYVHAMKQLEINIASEYLVLASELLMIKSKMLLPQSTSDMDVDDDPREDLVGRLIEYQNYKEYTAILNDMKEERDFYFTKRPTDLSHLETDESWDPNHTIDLTELIVAYQRVKNRVELNTPKSVEIRKETFTIQQATEQVTSRLKDKDHFNFFSLFTFSEPIEQVVTHFLAILEMSKAGIINIEQQRNFEDINIIRGVNYHFG</sequence>
<accession>Q5HFS7</accession>